<accession>Q5JYT7</accession>
<accession>Q9C0A8</accession>
<dbReference type="EMBL" id="AL031651">
    <property type="status" value="NOT_ANNOTATED_CDS"/>
    <property type="molecule type" value="Genomic_DNA"/>
</dbReference>
<dbReference type="EMBL" id="CH471077">
    <property type="protein sequence ID" value="EAW76038.1"/>
    <property type="molecule type" value="Genomic_DNA"/>
</dbReference>
<dbReference type="EMBL" id="AB051542">
    <property type="protein sequence ID" value="BAB21846.1"/>
    <property type="molecule type" value="mRNA"/>
</dbReference>
<dbReference type="CCDS" id="CCDS33467.1"/>
<dbReference type="RefSeq" id="NP_001025035.1">
    <property type="nucleotide sequence ID" value="NM_001029864.2"/>
</dbReference>
<dbReference type="SMR" id="Q5JYT7"/>
<dbReference type="BioGRID" id="124534">
    <property type="interactions" value="1"/>
</dbReference>
<dbReference type="FunCoup" id="Q5JYT7">
    <property type="interactions" value="60"/>
</dbReference>
<dbReference type="IntAct" id="Q5JYT7">
    <property type="interactions" value="1"/>
</dbReference>
<dbReference type="STRING" id="9606.ENSP00000279024"/>
<dbReference type="GlyGen" id="Q5JYT7">
    <property type="glycosylation" value="1 site"/>
</dbReference>
<dbReference type="iPTMnet" id="Q5JYT7"/>
<dbReference type="PhosphoSitePlus" id="Q5JYT7"/>
<dbReference type="BioMuta" id="KIAA1755"/>
<dbReference type="DMDM" id="166977309"/>
<dbReference type="jPOST" id="Q5JYT7"/>
<dbReference type="MassIVE" id="Q5JYT7"/>
<dbReference type="PaxDb" id="9606-ENSP00000279024"/>
<dbReference type="PeptideAtlas" id="Q5JYT7"/>
<dbReference type="ProteomicsDB" id="63515"/>
<dbReference type="Antibodypedia" id="55264">
    <property type="antibodies" value="6 antibodies from 6 providers"/>
</dbReference>
<dbReference type="DNASU" id="85449"/>
<dbReference type="Ensembl" id="ENST00000279024.9">
    <property type="protein sequence ID" value="ENSP00000279024.4"/>
    <property type="gene ID" value="ENSG00000149633.12"/>
</dbReference>
<dbReference type="GeneID" id="85449"/>
<dbReference type="KEGG" id="hsa:85449"/>
<dbReference type="MANE-Select" id="ENST00000279024.9">
    <property type="protein sequence ID" value="ENSP00000279024.4"/>
    <property type="RefSeq nucleotide sequence ID" value="NM_001029864.2"/>
    <property type="RefSeq protein sequence ID" value="NP_001025035.1"/>
</dbReference>
<dbReference type="UCSC" id="uc002xhy.2">
    <property type="organism name" value="human"/>
</dbReference>
<dbReference type="AGR" id="HGNC:29372"/>
<dbReference type="CTD" id="85449"/>
<dbReference type="DisGeNET" id="85449"/>
<dbReference type="GeneCards" id="KIAA1755"/>
<dbReference type="HGNC" id="HGNC:29372">
    <property type="gene designation" value="KIAA1755"/>
</dbReference>
<dbReference type="HPA" id="ENSG00000149633">
    <property type="expression patterns" value="Low tissue specificity"/>
</dbReference>
<dbReference type="MalaCards" id="KIAA1755"/>
<dbReference type="neXtProt" id="NX_Q5JYT7"/>
<dbReference type="OpenTargets" id="ENSG00000149633"/>
<dbReference type="PharmGKB" id="PA162393181"/>
<dbReference type="VEuPathDB" id="HostDB:ENSG00000149633"/>
<dbReference type="eggNOG" id="KOG4240">
    <property type="taxonomic scope" value="Eukaryota"/>
</dbReference>
<dbReference type="GeneTree" id="ENSGT00940000161174"/>
<dbReference type="HOGENOM" id="CLU_010854_0_0_1"/>
<dbReference type="InParanoid" id="Q5JYT7"/>
<dbReference type="OMA" id="EMGTEDW"/>
<dbReference type="OrthoDB" id="6152532at2759"/>
<dbReference type="PAN-GO" id="Q5JYT7">
    <property type="GO annotations" value="0 GO annotations based on evolutionary models"/>
</dbReference>
<dbReference type="PhylomeDB" id="Q5JYT7"/>
<dbReference type="TreeFam" id="TF334329"/>
<dbReference type="PathwayCommons" id="Q5JYT7"/>
<dbReference type="SignaLink" id="Q5JYT7"/>
<dbReference type="BioGRID-ORCS" id="85449">
    <property type="hits" value="9 hits in 1146 CRISPR screens"/>
</dbReference>
<dbReference type="GenomeRNAi" id="85449"/>
<dbReference type="Pharos" id="Q5JYT7">
    <property type="development level" value="Tdark"/>
</dbReference>
<dbReference type="PRO" id="PR:Q5JYT7"/>
<dbReference type="Proteomes" id="UP000005640">
    <property type="component" value="Chromosome 20"/>
</dbReference>
<dbReference type="RNAct" id="Q5JYT7">
    <property type="molecule type" value="protein"/>
</dbReference>
<dbReference type="Bgee" id="ENSG00000149633">
    <property type="expression patterns" value="Expressed in sural nerve and 135 other cell types or tissues"/>
</dbReference>
<dbReference type="ExpressionAtlas" id="Q5JYT7">
    <property type="expression patterns" value="baseline and differential"/>
</dbReference>
<dbReference type="GO" id="GO:0005737">
    <property type="term" value="C:cytoplasm"/>
    <property type="evidence" value="ECO:0000318"/>
    <property type="project" value="GO_Central"/>
</dbReference>
<dbReference type="GO" id="GO:0019898">
    <property type="term" value="C:extrinsic component of membrane"/>
    <property type="evidence" value="ECO:0000318"/>
    <property type="project" value="GO_Central"/>
</dbReference>
<dbReference type="GO" id="GO:0005886">
    <property type="term" value="C:plasma membrane"/>
    <property type="evidence" value="ECO:0000318"/>
    <property type="project" value="GO_Central"/>
</dbReference>
<dbReference type="GO" id="GO:0005085">
    <property type="term" value="F:guanyl-nucleotide exchange factor activity"/>
    <property type="evidence" value="ECO:0000318"/>
    <property type="project" value="GO_Central"/>
</dbReference>
<dbReference type="GO" id="GO:0007411">
    <property type="term" value="P:axon guidance"/>
    <property type="evidence" value="ECO:0000318"/>
    <property type="project" value="GO_Central"/>
</dbReference>
<dbReference type="Gene3D" id="1.20.58.60">
    <property type="match status" value="1"/>
</dbReference>
<dbReference type="InterPro" id="IPR052231">
    <property type="entry name" value="Rho_GEF_signaling-related"/>
</dbReference>
<dbReference type="PANTHER" id="PTHR45845">
    <property type="entry name" value="RHO GUANINE NUCLEOTIDE EXCHANGE FACTOR-RELATED"/>
    <property type="match status" value="1"/>
</dbReference>
<dbReference type="PANTHER" id="PTHR45845:SF2">
    <property type="entry name" value="RIKEN CDNA D630003M21 GENE"/>
    <property type="match status" value="1"/>
</dbReference>
<sequence length="1200" mass="130846">MDPPSLDTAIQHALAGLYPPFEATAPTVLGQVFRLLDSGFQGDGLSFLLDFLIPAKRLCEQVREAACAPYSHCLFLHEGWPLCLRDEVVVHLAPLNPLLLRQGDFYLQVEPQEEQSVCIMIKCLSLDLCTVDKKPVPEPAYPILFTQEWLEAINSDFEGNPLHNCLVASENGIAPVPWTKITSPEFVDDRPQVVNALCQAWGPLPLEALDLSSPQELHQASSPDNQVLPAQSLAKGKGRTYGSKYPGLIKVEQARCGEVAFRMDEVVSQDFEGDYVALLGFSQESRGESPSREAGTSSGCTSGALEEIAGTKETPLFQKILPLSEANEGPSLGNRACTKPESSEERPYNLGFRRKVNLKAPTHNSERPPQGSYMNVLEDALDCASGLRAGVSQEPAASKMQGPLGNPENMVQLRPGPRQASSPRLSPASPAAAASETKIEVKTKERNGRLPKPMPCPSRNTSSPEPPTPGLKFSFLRGQRQPSVTPEKASLQHNGPWKVLCSLYSPKPNRAKSLGKAGTTQTKTSGPATAPSPLTEEKAALPEASAGSPERGPTLEEEPPGPEPRIGALGVKVFRSRIACLPGGRDRAGRPLLLVSTTEGAWEAPWCTVSEVTKLLSYLCTIPRPEDKAKGLAVLIDARRQPPQPGLVSALQATQAQVPASIRAILFLGEKEAALQLQTLPDVQVEVLTSLKALSHHVDPSQLPAVLEGPFPYCHTEWVHFFQKLDPFLADLHQASSLLQASIEEFEKADPPGGMQEATRCLSKSKELMEAVLRDPGLLGLQREGGATLARLQHDASRLDFSPDVRSHLAAATALYSLVDEQLHVLVTASNSLLGKLELRVRLGRLEAAIHQVSDWMEQEGRRCLQSLTPKDGSLETVEKAHAEFENFFLQAAAQYRRGLELSKQAAQLGATARGAGEAERAEFPELAAFASTQRAFQAELTHFYMAAERQRTDLETLLHLHRFCKRMTWFHMDCQDLMAQLRLDKTSRVSPGDQRRLHRYLQRLASEFPAEKLAAVGLQVASLSRAGLGQELWEEARIRHEEIRMLLEKALTHSSCPEAPAAHSARPERRGVAAKGQGVSVEVTSKGRWDQPPLDSLGMDHLPKSYWPPGPPRGEQNRTFQAGSPPQEAGQAAEAEDGKGSHKLPDPAREHLLATTFFRQQPPRQSQVPRLTGGSFSSEGTDSQTSLEDSPQTSPLASL</sequence>
<name>K1755_HUMAN</name>
<gene>
    <name type="primary">KIAA1755</name>
</gene>
<proteinExistence type="evidence at protein level"/>
<feature type="chain" id="PRO_0000317284" description="Uncharacterized protein KIAA1755">
    <location>
        <begin position="1"/>
        <end position="1200"/>
    </location>
</feature>
<feature type="region of interest" description="Disordered" evidence="1">
    <location>
        <begin position="282"/>
        <end position="302"/>
    </location>
</feature>
<feature type="region of interest" description="Disordered" evidence="1">
    <location>
        <begin position="323"/>
        <end position="372"/>
    </location>
</feature>
<feature type="region of interest" description="Disordered" evidence="1">
    <location>
        <begin position="392"/>
        <end position="491"/>
    </location>
</feature>
<feature type="region of interest" description="Disordered" evidence="1">
    <location>
        <begin position="510"/>
        <end position="568"/>
    </location>
</feature>
<feature type="region of interest" description="Disordered" evidence="1">
    <location>
        <begin position="1056"/>
        <end position="1200"/>
    </location>
</feature>
<feature type="compositionally biased region" description="Low complexity" evidence="1">
    <location>
        <begin position="420"/>
        <end position="435"/>
    </location>
</feature>
<feature type="compositionally biased region" description="Basic and acidic residues" evidence="1">
    <location>
        <begin position="437"/>
        <end position="448"/>
    </location>
</feature>
<feature type="compositionally biased region" description="Polar residues" evidence="1">
    <location>
        <begin position="518"/>
        <end position="527"/>
    </location>
</feature>
<feature type="compositionally biased region" description="Basic and acidic residues" evidence="1">
    <location>
        <begin position="1137"/>
        <end position="1153"/>
    </location>
</feature>
<feature type="compositionally biased region" description="Low complexity" evidence="1">
    <location>
        <begin position="1160"/>
        <end position="1171"/>
    </location>
</feature>
<feature type="compositionally biased region" description="Polar residues" evidence="1">
    <location>
        <begin position="1175"/>
        <end position="1200"/>
    </location>
</feature>
<feature type="sequence variant" id="VAR_038501" description="In dbSNP:rs1205434." evidence="2">
    <original>K</original>
    <variation>N</variation>
    <location>
        <position position="339"/>
    </location>
</feature>
<feature type="sequence variant" id="VAR_038502" description="In dbSNP:rs6024235.">
    <original>P</original>
    <variation>L</variation>
    <location>
        <position position="415"/>
    </location>
</feature>
<feature type="sequence variant" id="VAR_038503" description="In dbSNP:rs16987188.">
    <original>A</original>
    <variation>V</variation>
    <location>
        <position position="633"/>
    </location>
</feature>
<feature type="sequence variant" id="VAR_038504" description="In dbSNP:rs760998." evidence="2">
    <original>E</original>
    <variation>K</variation>
    <location>
        <position position="940"/>
    </location>
</feature>
<feature type="sequence variant" id="VAR_038505" description="In dbSNP:rs3746471." evidence="2">
    <original>R</original>
    <variation>W</variation>
    <location>
        <position position="1045"/>
    </location>
</feature>
<keyword id="KW-1267">Proteomics identification</keyword>
<keyword id="KW-1185">Reference proteome</keyword>
<protein>
    <recommendedName>
        <fullName>Uncharacterized protein KIAA1755</fullName>
    </recommendedName>
</protein>
<organism>
    <name type="scientific">Homo sapiens</name>
    <name type="common">Human</name>
    <dbReference type="NCBI Taxonomy" id="9606"/>
    <lineage>
        <taxon>Eukaryota</taxon>
        <taxon>Metazoa</taxon>
        <taxon>Chordata</taxon>
        <taxon>Craniata</taxon>
        <taxon>Vertebrata</taxon>
        <taxon>Euteleostomi</taxon>
        <taxon>Mammalia</taxon>
        <taxon>Eutheria</taxon>
        <taxon>Euarchontoglires</taxon>
        <taxon>Primates</taxon>
        <taxon>Haplorrhini</taxon>
        <taxon>Catarrhini</taxon>
        <taxon>Hominidae</taxon>
        <taxon>Homo</taxon>
    </lineage>
</organism>
<evidence type="ECO:0000256" key="1">
    <source>
        <dbReference type="SAM" id="MobiDB-lite"/>
    </source>
</evidence>
<evidence type="ECO:0000269" key="2">
    <source>
    </source>
</evidence>
<reference key="1">
    <citation type="journal article" date="2001" name="Nature">
        <title>The DNA sequence and comparative analysis of human chromosome 20.</title>
        <authorList>
            <person name="Deloukas P."/>
            <person name="Matthews L.H."/>
            <person name="Ashurst J.L."/>
            <person name="Burton J."/>
            <person name="Gilbert J.G.R."/>
            <person name="Jones M."/>
            <person name="Stavrides G."/>
            <person name="Almeida J.P."/>
            <person name="Babbage A.K."/>
            <person name="Bagguley C.L."/>
            <person name="Bailey J."/>
            <person name="Barlow K.F."/>
            <person name="Bates K.N."/>
            <person name="Beard L.M."/>
            <person name="Beare D.M."/>
            <person name="Beasley O.P."/>
            <person name="Bird C.P."/>
            <person name="Blakey S.E."/>
            <person name="Bridgeman A.M."/>
            <person name="Brown A.J."/>
            <person name="Buck D."/>
            <person name="Burrill W.D."/>
            <person name="Butler A.P."/>
            <person name="Carder C."/>
            <person name="Carter N.P."/>
            <person name="Chapman J.C."/>
            <person name="Clamp M."/>
            <person name="Clark G."/>
            <person name="Clark L.N."/>
            <person name="Clark S.Y."/>
            <person name="Clee C.M."/>
            <person name="Clegg S."/>
            <person name="Cobley V.E."/>
            <person name="Collier R.E."/>
            <person name="Connor R.E."/>
            <person name="Corby N.R."/>
            <person name="Coulson A."/>
            <person name="Coville G.J."/>
            <person name="Deadman R."/>
            <person name="Dhami P.D."/>
            <person name="Dunn M."/>
            <person name="Ellington A.G."/>
            <person name="Frankland J.A."/>
            <person name="Fraser A."/>
            <person name="French L."/>
            <person name="Garner P."/>
            <person name="Grafham D.V."/>
            <person name="Griffiths C."/>
            <person name="Griffiths M.N.D."/>
            <person name="Gwilliam R."/>
            <person name="Hall R.E."/>
            <person name="Hammond S."/>
            <person name="Harley J.L."/>
            <person name="Heath P.D."/>
            <person name="Ho S."/>
            <person name="Holden J.L."/>
            <person name="Howden P.J."/>
            <person name="Huckle E."/>
            <person name="Hunt A.R."/>
            <person name="Hunt S.E."/>
            <person name="Jekosch K."/>
            <person name="Johnson C.M."/>
            <person name="Johnson D."/>
            <person name="Kay M.P."/>
            <person name="Kimberley A.M."/>
            <person name="King A."/>
            <person name="Knights A."/>
            <person name="Laird G.K."/>
            <person name="Lawlor S."/>
            <person name="Lehvaeslaiho M.H."/>
            <person name="Leversha M.A."/>
            <person name="Lloyd C."/>
            <person name="Lloyd D.M."/>
            <person name="Lovell J.D."/>
            <person name="Marsh V.L."/>
            <person name="Martin S.L."/>
            <person name="McConnachie L.J."/>
            <person name="McLay K."/>
            <person name="McMurray A.A."/>
            <person name="Milne S.A."/>
            <person name="Mistry D."/>
            <person name="Moore M.J.F."/>
            <person name="Mullikin J.C."/>
            <person name="Nickerson T."/>
            <person name="Oliver K."/>
            <person name="Parker A."/>
            <person name="Patel R."/>
            <person name="Pearce T.A.V."/>
            <person name="Peck A.I."/>
            <person name="Phillimore B.J.C.T."/>
            <person name="Prathalingam S.R."/>
            <person name="Plumb R.W."/>
            <person name="Ramsay H."/>
            <person name="Rice C.M."/>
            <person name="Ross M.T."/>
            <person name="Scott C.E."/>
            <person name="Sehra H.K."/>
            <person name="Shownkeen R."/>
            <person name="Sims S."/>
            <person name="Skuce C.D."/>
            <person name="Smith M.L."/>
            <person name="Soderlund C."/>
            <person name="Steward C.A."/>
            <person name="Sulston J.E."/>
            <person name="Swann R.M."/>
            <person name="Sycamore N."/>
            <person name="Taylor R."/>
            <person name="Tee L."/>
            <person name="Thomas D.W."/>
            <person name="Thorpe A."/>
            <person name="Tracey A."/>
            <person name="Tromans A.C."/>
            <person name="Vaudin M."/>
            <person name="Wall M."/>
            <person name="Wallis J.M."/>
            <person name="Whitehead S.L."/>
            <person name="Whittaker P."/>
            <person name="Willey D.L."/>
            <person name="Williams L."/>
            <person name="Williams S.A."/>
            <person name="Wilming L."/>
            <person name="Wray P.W."/>
            <person name="Hubbard T."/>
            <person name="Durbin R.M."/>
            <person name="Bentley D.R."/>
            <person name="Beck S."/>
            <person name="Rogers J."/>
        </authorList>
    </citation>
    <scope>NUCLEOTIDE SEQUENCE [LARGE SCALE GENOMIC DNA]</scope>
</reference>
<reference key="2">
    <citation type="submission" date="2005-09" db="EMBL/GenBank/DDBJ databases">
        <authorList>
            <person name="Mural R.J."/>
            <person name="Istrail S."/>
            <person name="Sutton G.G."/>
            <person name="Florea L."/>
            <person name="Halpern A.L."/>
            <person name="Mobarry C.M."/>
            <person name="Lippert R."/>
            <person name="Walenz B."/>
            <person name="Shatkay H."/>
            <person name="Dew I."/>
            <person name="Miller J.R."/>
            <person name="Flanigan M.J."/>
            <person name="Edwards N.J."/>
            <person name="Bolanos R."/>
            <person name="Fasulo D."/>
            <person name="Halldorsson B.V."/>
            <person name="Hannenhalli S."/>
            <person name="Turner R."/>
            <person name="Yooseph S."/>
            <person name="Lu F."/>
            <person name="Nusskern D.R."/>
            <person name="Shue B.C."/>
            <person name="Zheng X.H."/>
            <person name="Zhong F."/>
            <person name="Delcher A.L."/>
            <person name="Huson D.H."/>
            <person name="Kravitz S.A."/>
            <person name="Mouchard L."/>
            <person name="Reinert K."/>
            <person name="Remington K.A."/>
            <person name="Clark A.G."/>
            <person name="Waterman M.S."/>
            <person name="Eichler E.E."/>
            <person name="Adams M.D."/>
            <person name="Hunkapiller M.W."/>
            <person name="Myers E.W."/>
            <person name="Venter J.C."/>
        </authorList>
    </citation>
    <scope>NUCLEOTIDE SEQUENCE [LARGE SCALE GENOMIC DNA]</scope>
</reference>
<reference key="3">
    <citation type="journal article" date="2000" name="DNA Res.">
        <title>Prediction of the coding sequences of unidentified human genes. XIX. The complete sequences of 100 new cDNA clones from brain which code for large proteins in vitro.</title>
        <authorList>
            <person name="Nagase T."/>
            <person name="Kikuno R."/>
            <person name="Hattori A."/>
            <person name="Kondo Y."/>
            <person name="Okumura K."/>
            <person name="Ohara O."/>
        </authorList>
    </citation>
    <scope>NUCLEOTIDE SEQUENCE [LARGE SCALE MRNA] OF 91-1200</scope>
    <scope>VARIANTS ASN-339; LYS-940 AND TRP-1045</scope>
</reference>